<gene>
    <name evidence="1" type="primary">fbp</name>
    <name type="ordered locus">CLH_2300</name>
</gene>
<protein>
    <recommendedName>
        <fullName evidence="1">Fructose-1,6-bisphosphatase class 3</fullName>
        <shortName evidence="1">FBPase class 3</shortName>
        <ecNumber evidence="1">3.1.3.11</ecNumber>
    </recommendedName>
    <alternativeName>
        <fullName evidence="1">D-fructose-1,6-bisphosphate 1-phosphohydrolase class 3</fullName>
    </alternativeName>
</protein>
<reference key="1">
    <citation type="submission" date="2008-05" db="EMBL/GenBank/DDBJ databases">
        <title>Complete genome sequence of Clostridium botulinum E3 str. Alaska E43.</title>
        <authorList>
            <person name="Brinkac L.M."/>
            <person name="Brown J.L."/>
            <person name="Bruce D."/>
            <person name="Detter C."/>
            <person name="Munk C."/>
            <person name="Smith L.A."/>
            <person name="Smith T.J."/>
            <person name="Sutton G."/>
            <person name="Brettin T.S."/>
        </authorList>
    </citation>
    <scope>NUCLEOTIDE SEQUENCE [LARGE SCALE GENOMIC DNA]</scope>
    <source>
        <strain>Alaska E43 / Type E3</strain>
    </source>
</reference>
<keyword id="KW-0119">Carbohydrate metabolism</keyword>
<keyword id="KW-0378">Hydrolase</keyword>
<keyword id="KW-0464">Manganese</keyword>
<dbReference type="EC" id="3.1.3.11" evidence="1"/>
<dbReference type="EMBL" id="CP001078">
    <property type="protein sequence ID" value="ACD52126.1"/>
    <property type="molecule type" value="Genomic_DNA"/>
</dbReference>
<dbReference type="KEGG" id="cbt:CLH_2300"/>
<dbReference type="HOGENOM" id="CLU_028392_2_0_9"/>
<dbReference type="UniPathway" id="UPA00138"/>
<dbReference type="GO" id="GO:0042132">
    <property type="term" value="F:fructose 1,6-bisphosphate 1-phosphatase activity"/>
    <property type="evidence" value="ECO:0007669"/>
    <property type="project" value="UniProtKB-UniRule"/>
</dbReference>
<dbReference type="GO" id="GO:0006094">
    <property type="term" value="P:gluconeogenesis"/>
    <property type="evidence" value="ECO:0007669"/>
    <property type="project" value="UniProtKB-UniRule"/>
</dbReference>
<dbReference type="Gene3D" id="3.60.21.10">
    <property type="match status" value="1"/>
</dbReference>
<dbReference type="HAMAP" id="MF_01854">
    <property type="entry name" value="FBPase_class3"/>
    <property type="match status" value="1"/>
</dbReference>
<dbReference type="InterPro" id="IPR009164">
    <property type="entry name" value="FBPtase_class3"/>
</dbReference>
<dbReference type="InterPro" id="IPR029052">
    <property type="entry name" value="Metallo-depent_PP-like"/>
</dbReference>
<dbReference type="Pfam" id="PF06874">
    <property type="entry name" value="FBPase_2"/>
    <property type="match status" value="1"/>
</dbReference>
<dbReference type="PIRSF" id="PIRSF000906">
    <property type="entry name" value="FBPtase_Bacill"/>
    <property type="match status" value="1"/>
</dbReference>
<dbReference type="SUPFAM" id="SSF56300">
    <property type="entry name" value="Metallo-dependent phosphatases"/>
    <property type="match status" value="2"/>
</dbReference>
<comment type="catalytic activity">
    <reaction evidence="1">
        <text>beta-D-fructose 1,6-bisphosphate + H2O = beta-D-fructose 6-phosphate + phosphate</text>
        <dbReference type="Rhea" id="RHEA:11064"/>
        <dbReference type="ChEBI" id="CHEBI:15377"/>
        <dbReference type="ChEBI" id="CHEBI:32966"/>
        <dbReference type="ChEBI" id="CHEBI:43474"/>
        <dbReference type="ChEBI" id="CHEBI:57634"/>
        <dbReference type="EC" id="3.1.3.11"/>
    </reaction>
</comment>
<comment type="cofactor">
    <cofactor evidence="1">
        <name>Mn(2+)</name>
        <dbReference type="ChEBI" id="CHEBI:29035"/>
    </cofactor>
</comment>
<comment type="pathway">
    <text evidence="1">Carbohydrate biosynthesis; gluconeogenesis.</text>
</comment>
<comment type="similarity">
    <text evidence="1">Belongs to the FBPase class 3 family.</text>
</comment>
<sequence>MNNNDVEDIKKLKYFRLLAKQYPNIALAATEIINLEAILNLPKGTEHFLSDIHGEYEPFVHVLRNGSGVVKRKIEDLFCKSLLESDIKSLATLIYYPEQKLDIVLKEERNIDDWYKITLNRLIEICRFCSSKYTRSKVRKALPADFAYIIEELLHEQFNGIDKEEYYDRIITTIIDIGRAKEFIIALSKLIQRMIIDRLHIIGDIYDRGPRPDIIIDTLMEYHSVDIQWGNHDMLWMGAAAGVRTCVANVLRISTRYANLDLVEEIYGINLLPLATFALKYYRDDPCESFIPKVKEDDPAANQEVDLVSKMHKAITILQFKLEKEIIDRRPEFELEERLLLDKIDYEKGTIILNGTEYKLNDNNFPTIDPKDPYKLTEEESVLIDKLVYSFVNSDKLQKHVRFLFSKGNMYLKFNSNLLFHGCIPLDDDGNLKSMWIQGEEYESKRLLEKFDSLSREGYFEKVGSEEKTYGMDIMWYLWTGPVSPLFGKKKMATFERYFIDDEIAHIEQKTGYYKLRDREEMCDMILREFGLDPSESRIINGHVPVKKKNGESPIKANGKMIVIDGGFSKAYQKQTGIAGYTLIYNSYGLQLVSHEHFSSTEESIMKEKDILSTTLVVEQKLKRKTVEDTDIGKELQVQIKDLKELLLIYRKGIIKEIR</sequence>
<accession>B2V5F2</accession>
<evidence type="ECO:0000255" key="1">
    <source>
        <dbReference type="HAMAP-Rule" id="MF_01854"/>
    </source>
</evidence>
<organism>
    <name type="scientific">Clostridium botulinum (strain Alaska E43 / Type E3)</name>
    <dbReference type="NCBI Taxonomy" id="508767"/>
    <lineage>
        <taxon>Bacteria</taxon>
        <taxon>Bacillati</taxon>
        <taxon>Bacillota</taxon>
        <taxon>Clostridia</taxon>
        <taxon>Eubacteriales</taxon>
        <taxon>Clostridiaceae</taxon>
        <taxon>Clostridium</taxon>
    </lineage>
</organism>
<name>F16PC_CLOBA</name>
<proteinExistence type="inferred from homology"/>
<feature type="chain" id="PRO_0000363080" description="Fructose-1,6-bisphosphatase class 3">
    <location>
        <begin position="1"/>
        <end position="659"/>
    </location>
</feature>